<dbReference type="EMBL" id="CP000046">
    <property type="protein sequence ID" value="AAW36477.1"/>
    <property type="molecule type" value="Genomic_DNA"/>
</dbReference>
<dbReference type="RefSeq" id="WP_001242102.1">
    <property type="nucleotide sequence ID" value="NZ_JBGOFO010000002.1"/>
</dbReference>
<dbReference type="KEGG" id="sac:SACOL1009"/>
<dbReference type="HOGENOM" id="CLU_142282_0_0_9"/>
<dbReference type="Proteomes" id="UP000000530">
    <property type="component" value="Chromosome"/>
</dbReference>
<dbReference type="HAMAP" id="MF_01861">
    <property type="entry name" value="UPF0738"/>
    <property type="match status" value="1"/>
</dbReference>
<dbReference type="InterPro" id="IPR020908">
    <property type="entry name" value="UPF0738"/>
</dbReference>
<dbReference type="Pfam" id="PF19785">
    <property type="entry name" value="UPF0738"/>
    <property type="match status" value="1"/>
</dbReference>
<protein>
    <recommendedName>
        <fullName evidence="1">UPF0738 protein SACOL1009</fullName>
    </recommendedName>
</protein>
<comment type="similarity">
    <text evidence="1">Belongs to the UPF0738 family.</text>
</comment>
<accession>Q5HH80</accession>
<sequence>MRLYINEIKIKDDILYCYTEDSIKGLSEVGQMLVDSDNYAFAYTLDDGKAYAYLIFVQETWTMLHENMTKKIIINDELELTEFHQELTYILDNIKGNNNYGKEFVATVEETFDIE</sequence>
<proteinExistence type="inferred from homology"/>
<feature type="chain" id="PRO_0000369658" description="UPF0738 protein SACOL1009">
    <location>
        <begin position="1"/>
        <end position="115"/>
    </location>
</feature>
<organism>
    <name type="scientific">Staphylococcus aureus (strain COL)</name>
    <dbReference type="NCBI Taxonomy" id="93062"/>
    <lineage>
        <taxon>Bacteria</taxon>
        <taxon>Bacillati</taxon>
        <taxon>Bacillota</taxon>
        <taxon>Bacilli</taxon>
        <taxon>Bacillales</taxon>
        <taxon>Staphylococcaceae</taxon>
        <taxon>Staphylococcus</taxon>
    </lineage>
</organism>
<evidence type="ECO:0000255" key="1">
    <source>
        <dbReference type="HAMAP-Rule" id="MF_01861"/>
    </source>
</evidence>
<reference key="1">
    <citation type="journal article" date="2005" name="J. Bacteriol.">
        <title>Insights on evolution of virulence and resistance from the complete genome analysis of an early methicillin-resistant Staphylococcus aureus strain and a biofilm-producing methicillin-resistant Staphylococcus epidermidis strain.</title>
        <authorList>
            <person name="Gill S.R."/>
            <person name="Fouts D.E."/>
            <person name="Archer G.L."/>
            <person name="Mongodin E.F."/>
            <person name="DeBoy R.T."/>
            <person name="Ravel J."/>
            <person name="Paulsen I.T."/>
            <person name="Kolonay J.F."/>
            <person name="Brinkac L.M."/>
            <person name="Beanan M.J."/>
            <person name="Dodson R.J."/>
            <person name="Daugherty S.C."/>
            <person name="Madupu R."/>
            <person name="Angiuoli S.V."/>
            <person name="Durkin A.S."/>
            <person name="Haft D.H."/>
            <person name="Vamathevan J.J."/>
            <person name="Khouri H."/>
            <person name="Utterback T.R."/>
            <person name="Lee C."/>
            <person name="Dimitrov G."/>
            <person name="Jiang L."/>
            <person name="Qin H."/>
            <person name="Weidman J."/>
            <person name="Tran K."/>
            <person name="Kang K.H."/>
            <person name="Hance I.R."/>
            <person name="Nelson K.E."/>
            <person name="Fraser C.M."/>
        </authorList>
    </citation>
    <scope>NUCLEOTIDE SEQUENCE [LARGE SCALE GENOMIC DNA]</scope>
    <source>
        <strain>COL</strain>
    </source>
</reference>
<name>Y1009_STAAC</name>
<gene>
    <name type="ordered locus">SACOL1009</name>
</gene>